<name>RHM3_ARATH</name>
<comment type="function">
    <text evidence="2 4 6">Trifunctional enzyme involved in UDP-beta-L-rhamnose biosynthesis, a precursor of the primary cell wall components rhamnogalacturonan I (RG-I) and rhamnogalacturonan II (RG-II) (PubMed:17190829). Catalyzes the dehydration of UDP-glucose to form UDP-4-dehydro-6-deoxy-D-glucose followed by the epimerization of the C3' and C5' positions of UDP-4-dehydro-6-deoxy-D-glucose to form UDP-4-keto-beta-L-rhamnose and the reduction of UDP-4-keto-beta-L-rhamnose to yield UDP-beta-L-rhamnose (By similarity).</text>
</comment>
<comment type="catalytic activity">
    <reaction evidence="2">
        <text>UDP-alpha-D-glucose = UDP-4-dehydro-6-deoxy-alpha-D-glucose + H2O</text>
        <dbReference type="Rhea" id="RHEA:21500"/>
        <dbReference type="ChEBI" id="CHEBI:15377"/>
        <dbReference type="ChEBI" id="CHEBI:58885"/>
        <dbReference type="ChEBI" id="CHEBI:85329"/>
        <dbReference type="EC" id="4.2.1.76"/>
    </reaction>
</comment>
<comment type="cofactor">
    <cofactor evidence="2">
        <name>NAD(+)</name>
        <dbReference type="ChEBI" id="CHEBI:57540"/>
    </cofactor>
</comment>
<comment type="cofactor">
    <cofactor evidence="2">
        <name>NADP(+)</name>
        <dbReference type="ChEBI" id="CHEBI:58349"/>
    </cofactor>
</comment>
<comment type="pathway">
    <text evidence="8">Carbohydrate biosynthesis.</text>
</comment>
<comment type="tissue specificity">
    <text evidence="4 5">Expressed in roots, stems, seedlings, and siliques. Lower expression in inflorescence tips, and leaves.</text>
</comment>
<comment type="domain">
    <text evidence="2">The dehydratase activity is contained in the N-terminal region while the epimerase and reductase activities are in the C-terminal region.</text>
</comment>
<comment type="miscellaneous">
    <text>In bacteria, TDP-L-rhamnose is formed by the successive action of three different enzymes on TDP-D-glucose. In plants, on the other hand, a single polypeptide probably catalyzes all three reactions that lead to the conversion of UDP-D-glucose to UDP-L-rhamnose.</text>
</comment>
<comment type="similarity">
    <text evidence="8">In the N-terminal section; belongs to the NAD(P)-dependent epimerase/dehydratase family. dTDP-glucose dehydratase subfamily.</text>
</comment>
<comment type="similarity">
    <text evidence="8">In the C-terminal section; belongs to the dTDP-4-dehydrorhamnose reductase family.</text>
</comment>
<reference key="1">
    <citation type="journal article" date="2000" name="DNA Res.">
        <title>Structural analysis of Arabidopsis thaliana chromosome 3. II. Sequence features of the 4,251,695 bp regions covered by 90 P1, TAC and BAC clones.</title>
        <authorList>
            <person name="Kaneko T."/>
            <person name="Katoh T."/>
            <person name="Sato S."/>
            <person name="Nakamura Y."/>
            <person name="Asamizu E."/>
            <person name="Tabata S."/>
        </authorList>
    </citation>
    <scope>NUCLEOTIDE SEQUENCE [LARGE SCALE GENOMIC DNA]</scope>
    <source>
        <strain>cv. Columbia</strain>
    </source>
</reference>
<reference key="2">
    <citation type="journal article" date="2017" name="Plant J.">
        <title>Araport11: a complete reannotation of the Arabidopsis thaliana reference genome.</title>
        <authorList>
            <person name="Cheng C.Y."/>
            <person name="Krishnakumar V."/>
            <person name="Chan A.P."/>
            <person name="Thibaud-Nissen F."/>
            <person name="Schobel S."/>
            <person name="Town C.D."/>
        </authorList>
    </citation>
    <scope>GENOME REANNOTATION</scope>
    <source>
        <strain>cv. Columbia</strain>
    </source>
</reference>
<reference key="3">
    <citation type="journal article" date="2003" name="Science">
        <title>Empirical analysis of transcriptional activity in the Arabidopsis genome.</title>
        <authorList>
            <person name="Yamada K."/>
            <person name="Lim J."/>
            <person name="Dale J.M."/>
            <person name="Chen H."/>
            <person name="Shinn P."/>
            <person name="Palm C.J."/>
            <person name="Southwick A.M."/>
            <person name="Wu H.C."/>
            <person name="Kim C.J."/>
            <person name="Nguyen M."/>
            <person name="Pham P.K."/>
            <person name="Cheuk R.F."/>
            <person name="Karlin-Newmann G."/>
            <person name="Liu S.X."/>
            <person name="Lam B."/>
            <person name="Sakano H."/>
            <person name="Wu T."/>
            <person name="Yu G."/>
            <person name="Miranda M."/>
            <person name="Quach H.L."/>
            <person name="Tripp M."/>
            <person name="Chang C.H."/>
            <person name="Lee J.M."/>
            <person name="Toriumi M.J."/>
            <person name="Chan M.M."/>
            <person name="Tang C.C."/>
            <person name="Onodera C.S."/>
            <person name="Deng J.M."/>
            <person name="Akiyama K."/>
            <person name="Ansari Y."/>
            <person name="Arakawa T."/>
            <person name="Banh J."/>
            <person name="Banno F."/>
            <person name="Bowser L."/>
            <person name="Brooks S.Y."/>
            <person name="Carninci P."/>
            <person name="Chao Q."/>
            <person name="Choy N."/>
            <person name="Enju A."/>
            <person name="Goldsmith A.D."/>
            <person name="Gurjal M."/>
            <person name="Hansen N.F."/>
            <person name="Hayashizaki Y."/>
            <person name="Johnson-Hopson C."/>
            <person name="Hsuan V.W."/>
            <person name="Iida K."/>
            <person name="Karnes M."/>
            <person name="Khan S."/>
            <person name="Koesema E."/>
            <person name="Ishida J."/>
            <person name="Jiang P.X."/>
            <person name="Jones T."/>
            <person name="Kawai J."/>
            <person name="Kamiya A."/>
            <person name="Meyers C."/>
            <person name="Nakajima M."/>
            <person name="Narusaka M."/>
            <person name="Seki M."/>
            <person name="Sakurai T."/>
            <person name="Satou M."/>
            <person name="Tamse R."/>
            <person name="Vaysberg M."/>
            <person name="Wallender E.K."/>
            <person name="Wong C."/>
            <person name="Yamamura Y."/>
            <person name="Yuan S."/>
            <person name="Shinozaki K."/>
            <person name="Davis R.W."/>
            <person name="Theologis A."/>
            <person name="Ecker J.R."/>
        </authorList>
    </citation>
    <scope>NUCLEOTIDE SEQUENCE [LARGE SCALE MRNA]</scope>
    <source>
        <strain>cv. Columbia</strain>
    </source>
</reference>
<reference key="4">
    <citation type="journal article" date="2004" name="Plant Physiol.">
        <title>RHM2 is involved in mucilage pectin synthesis and is required for the development of the seed coat in Arabidopsis.</title>
        <authorList>
            <person name="Usadel B."/>
            <person name="Kuschinsky A.M."/>
            <person name="Rosso M.G."/>
            <person name="Eckermann N."/>
            <person name="Pauly M."/>
        </authorList>
    </citation>
    <scope>FUNCTION</scope>
    <scope>TISSUE SPECIFICITY</scope>
</reference>
<reference key="5">
    <citation type="journal article" date="2004" name="Plant Physiol.">
        <title>MUCILAGE-MODIFIED4 encodes a putative pectin biosynthetic enzyme developmentally regulated by APETALA2, TRANSPARENT TESTA GLABRA1, and GLABRA2 in the Arabidopsis seed coat.</title>
        <authorList>
            <person name="Western T.L."/>
            <person name="Young D.S."/>
            <person name="Dean G.H."/>
            <person name="Tan W.L."/>
            <person name="Samuels A.L."/>
            <person name="Haughn G.W."/>
        </authorList>
    </citation>
    <scope>TISSUE SPECIFICITY</scope>
    <source>
        <strain>cv. Col-2</strain>
    </source>
</reference>
<reference key="6">
    <citation type="journal article" date="2001" name="Plant Mol. Biol.">
        <title>Molecular genetics of nucleotide sugar interconversion pathways in plants.</title>
        <authorList>
            <person name="Reiter W.-D."/>
            <person name="Vanzin G.F."/>
        </authorList>
    </citation>
    <scope>IDENTIFICATION</scope>
</reference>
<reference key="7">
    <citation type="journal article" date="2004" name="Curr. Opin. Plant Biol.">
        <title>Nucleotide sugar interconversions and cell wall biosynthesis: how to bring the inside to the outside.</title>
        <authorList>
            <person name="Seifert G.J."/>
        </authorList>
    </citation>
    <scope>REVIEW</scope>
    <scope>NOMENCLATURE</scope>
</reference>
<reference key="8">
    <citation type="journal article" date="2007" name="J. Biol. Chem.">
        <title>Functional analysis of Arabidopsis thaliana RHM2/MUM4, a multidomain protein involved in UDP-D-glucose to UDP-L-rhamnose conversion.</title>
        <authorList>
            <person name="Oka T."/>
            <person name="Nemoto T."/>
            <person name="Jigami Y."/>
        </authorList>
    </citation>
    <scope>FUNCTION</scope>
</reference>
<keyword id="KW-0413">Isomerase</keyword>
<keyword id="KW-0456">Lyase</keyword>
<keyword id="KW-0511">Multifunctional enzyme</keyword>
<keyword id="KW-0520">NAD</keyword>
<keyword id="KW-0521">NADP</keyword>
<keyword id="KW-0560">Oxidoreductase</keyword>
<keyword id="KW-1185">Reference proteome</keyword>
<proteinExistence type="evidence at transcript level"/>
<protein>
    <recommendedName>
        <fullName evidence="9">Trifunctional UDP-glucose 4,6-dehydratase/UDP-4-keto-6-deoxy-D-glucose 3,5-epimerase/UDP-4-keto-L-rhamnose-reductase RHM3</fullName>
    </recommendedName>
    <alternativeName>
        <fullName>Probable rhamnose biosynthetic enzyme 3</fullName>
        <shortName>AtRHM3</shortName>
    </alternativeName>
    <domain>
        <recommendedName>
            <fullName evidence="9">UDP-glucose 4,6-dehydratase</fullName>
            <ecNumber evidence="9">4.2.1.76</ecNumber>
        </recommendedName>
    </domain>
    <domain>
        <recommendedName>
            <fullName evidence="9">UDP-4-keto-6-deoxy-D-glucose 3,5-epimerase/UDP-4-keto-L-rhamnose 4-keto-reductase</fullName>
            <ecNumber evidence="9">1.1.1.-</ecNumber>
            <ecNumber evidence="9">5.1.3.-</ecNumber>
        </recommendedName>
    </domain>
</protein>
<organism>
    <name type="scientific">Arabidopsis thaliana</name>
    <name type="common">Mouse-ear cress</name>
    <dbReference type="NCBI Taxonomy" id="3702"/>
    <lineage>
        <taxon>Eukaryota</taxon>
        <taxon>Viridiplantae</taxon>
        <taxon>Streptophyta</taxon>
        <taxon>Embryophyta</taxon>
        <taxon>Tracheophyta</taxon>
        <taxon>Spermatophyta</taxon>
        <taxon>Magnoliopsida</taxon>
        <taxon>eudicotyledons</taxon>
        <taxon>Gunneridae</taxon>
        <taxon>Pentapetalae</taxon>
        <taxon>rosids</taxon>
        <taxon>malvids</taxon>
        <taxon>Brassicales</taxon>
        <taxon>Brassicaceae</taxon>
        <taxon>Camelineae</taxon>
        <taxon>Arabidopsis</taxon>
    </lineage>
</organism>
<feature type="chain" id="PRO_0000183254" description="Trifunctional UDP-glucose 4,6-dehydratase/UDP-4-keto-6-deoxy-D-glucose 3,5-epimerase/UDP-4-keto-L-rhamnose-reductase RHM3">
    <location>
        <begin position="1"/>
        <end position="664"/>
    </location>
</feature>
<feature type="active site" description="Proton donor" evidence="1">
    <location>
        <position position="133"/>
    </location>
</feature>
<feature type="active site" description="Proton acceptor" evidence="1">
    <location>
        <position position="134"/>
    </location>
</feature>
<feature type="active site" description="Proton acceptor" evidence="1">
    <location>
        <position position="159"/>
    </location>
</feature>
<feature type="binding site" evidence="3">
    <location>
        <begin position="13"/>
        <end position="19"/>
    </location>
    <ligand>
        <name>NAD(+)</name>
        <dbReference type="ChEBI" id="CHEBI:57540"/>
    </ligand>
</feature>
<feature type="binding site" evidence="1">
    <location>
        <position position="132"/>
    </location>
    <ligand>
        <name>substrate</name>
    </ligand>
</feature>
<feature type="binding site" evidence="2">
    <location>
        <begin position="386"/>
        <end position="392"/>
    </location>
    <ligand>
        <name>NADP(+)</name>
        <dbReference type="ChEBI" id="CHEBI:58349"/>
    </ligand>
</feature>
<evidence type="ECO:0000250" key="1"/>
<evidence type="ECO:0000250" key="2">
    <source>
        <dbReference type="UniProtKB" id="Q9LPG6"/>
    </source>
</evidence>
<evidence type="ECO:0000255" key="3"/>
<evidence type="ECO:0000269" key="4">
    <source>
    </source>
</evidence>
<evidence type="ECO:0000269" key="5">
    <source>
    </source>
</evidence>
<evidence type="ECO:0000269" key="6">
    <source>
    </source>
</evidence>
<evidence type="ECO:0000303" key="7">
    <source>
    </source>
</evidence>
<evidence type="ECO:0000305" key="8"/>
<evidence type="ECO:0000305" key="9">
    <source>
    </source>
</evidence>
<accession>Q9LH76</accession>
<gene>
    <name evidence="7" type="primary">RHM3</name>
    <name type="ordered locus">At3g14790</name>
    <name type="ORF">T21E2_4</name>
</gene>
<dbReference type="EC" id="4.2.1.76" evidence="9"/>
<dbReference type="EC" id="1.1.1.-" evidence="9"/>
<dbReference type="EC" id="5.1.3.-" evidence="9"/>
<dbReference type="EMBL" id="AP002061">
    <property type="protein sequence ID" value="BAB02645.1"/>
    <property type="molecule type" value="Genomic_DNA"/>
</dbReference>
<dbReference type="EMBL" id="CP002686">
    <property type="protein sequence ID" value="AEE75567.1"/>
    <property type="molecule type" value="Genomic_DNA"/>
</dbReference>
<dbReference type="EMBL" id="AY078958">
    <property type="protein sequence ID" value="AAL84958.1"/>
    <property type="molecule type" value="mRNA"/>
</dbReference>
<dbReference type="EMBL" id="AY142060">
    <property type="protein sequence ID" value="AAM98324.1"/>
    <property type="molecule type" value="mRNA"/>
</dbReference>
<dbReference type="RefSeq" id="NP_188097.1">
    <property type="nucleotide sequence ID" value="NM_112340.4"/>
</dbReference>
<dbReference type="SMR" id="Q9LH76"/>
<dbReference type="BioGRID" id="6041">
    <property type="interactions" value="3"/>
</dbReference>
<dbReference type="FunCoup" id="Q9LH76">
    <property type="interactions" value="241"/>
</dbReference>
<dbReference type="IntAct" id="Q9LH76">
    <property type="interactions" value="2"/>
</dbReference>
<dbReference type="STRING" id="3702.Q9LH76"/>
<dbReference type="iPTMnet" id="Q9LH76"/>
<dbReference type="PaxDb" id="3702-AT3G14790.1"/>
<dbReference type="ProteomicsDB" id="236950"/>
<dbReference type="EnsemblPlants" id="AT3G14790.1">
    <property type="protein sequence ID" value="AT3G14790.1"/>
    <property type="gene ID" value="AT3G14790"/>
</dbReference>
<dbReference type="GeneID" id="820707"/>
<dbReference type="Gramene" id="AT3G14790.1">
    <property type="protein sequence ID" value="AT3G14790.1"/>
    <property type="gene ID" value="AT3G14790"/>
</dbReference>
<dbReference type="KEGG" id="ath:AT3G14790"/>
<dbReference type="Araport" id="AT3G14790"/>
<dbReference type="TAIR" id="AT3G14790">
    <property type="gene designation" value="RHM3"/>
</dbReference>
<dbReference type="eggNOG" id="KOG0747">
    <property type="taxonomic scope" value="Eukaryota"/>
</dbReference>
<dbReference type="HOGENOM" id="CLU_026813_1_0_1"/>
<dbReference type="InParanoid" id="Q9LH76"/>
<dbReference type="OMA" id="TIAWEHS"/>
<dbReference type="PhylomeDB" id="Q9LH76"/>
<dbReference type="BioCyc" id="ARA:AT3G14790-MONOMER"/>
<dbReference type="BioCyc" id="MetaCyc:AT3G14790-MONOMER"/>
<dbReference type="PRO" id="PR:Q9LH76"/>
<dbReference type="Proteomes" id="UP000006548">
    <property type="component" value="Chromosome 3"/>
</dbReference>
<dbReference type="ExpressionAtlas" id="Q9LH76">
    <property type="expression patterns" value="baseline and differential"/>
</dbReference>
<dbReference type="GO" id="GO:0005829">
    <property type="term" value="C:cytosol"/>
    <property type="evidence" value="ECO:0007005"/>
    <property type="project" value="TAIR"/>
</dbReference>
<dbReference type="GO" id="GO:0009506">
    <property type="term" value="C:plasmodesma"/>
    <property type="evidence" value="ECO:0007005"/>
    <property type="project" value="TAIR"/>
</dbReference>
<dbReference type="GO" id="GO:0008460">
    <property type="term" value="F:dTDP-glucose 4,6-dehydratase activity"/>
    <property type="evidence" value="ECO:0007669"/>
    <property type="project" value="InterPro"/>
</dbReference>
<dbReference type="GO" id="GO:0016853">
    <property type="term" value="F:isomerase activity"/>
    <property type="evidence" value="ECO:0007669"/>
    <property type="project" value="UniProtKB-KW"/>
</dbReference>
<dbReference type="GO" id="GO:0016491">
    <property type="term" value="F:oxidoreductase activity"/>
    <property type="evidence" value="ECO:0007669"/>
    <property type="project" value="UniProtKB-KW"/>
</dbReference>
<dbReference type="GO" id="GO:0050377">
    <property type="term" value="F:UDP-glucose 4,6-dehydratase activity"/>
    <property type="evidence" value="ECO:0007669"/>
    <property type="project" value="UniProtKB-EC"/>
</dbReference>
<dbReference type="GO" id="GO:0010280">
    <property type="term" value="F:UDP-L-rhamnose synthase activity"/>
    <property type="evidence" value="ECO:0000314"/>
    <property type="project" value="TAIR"/>
</dbReference>
<dbReference type="GO" id="GO:0010253">
    <property type="term" value="P:UDP-rhamnose biosynthetic process"/>
    <property type="evidence" value="ECO:0000314"/>
    <property type="project" value="TAIR"/>
</dbReference>
<dbReference type="CDD" id="cd05246">
    <property type="entry name" value="dTDP_GD_SDR_e"/>
    <property type="match status" value="1"/>
</dbReference>
<dbReference type="FunFam" id="3.40.50.720:FF:000236">
    <property type="entry name" value="Bifunctional dTDP-4-dehydrorhamnose 3,5-epimerase/dTDP-4-dehydrorhamnose reductase"/>
    <property type="match status" value="1"/>
</dbReference>
<dbReference type="FunFam" id="3.40.50.720:FF:000304">
    <property type="entry name" value="UDP-glucose 4,6-dehydratase"/>
    <property type="match status" value="1"/>
</dbReference>
<dbReference type="Gene3D" id="3.40.50.720">
    <property type="entry name" value="NAD(P)-binding Rossmann-like Domain"/>
    <property type="match status" value="2"/>
</dbReference>
<dbReference type="Gene3D" id="3.90.25.10">
    <property type="entry name" value="UDP-galactose 4-epimerase, domain 1"/>
    <property type="match status" value="1"/>
</dbReference>
<dbReference type="InterPro" id="IPR005888">
    <property type="entry name" value="dTDP_Gluc_deHydtase"/>
</dbReference>
<dbReference type="InterPro" id="IPR016040">
    <property type="entry name" value="NAD(P)-bd_dom"/>
</dbReference>
<dbReference type="InterPro" id="IPR036291">
    <property type="entry name" value="NAD(P)-bd_dom_sf"/>
</dbReference>
<dbReference type="InterPro" id="IPR029903">
    <property type="entry name" value="RmlD-like-bd"/>
</dbReference>
<dbReference type="PANTHER" id="PTHR43000">
    <property type="entry name" value="DTDP-D-GLUCOSE 4,6-DEHYDRATASE-RELATED"/>
    <property type="match status" value="1"/>
</dbReference>
<dbReference type="Pfam" id="PF16363">
    <property type="entry name" value="GDP_Man_Dehyd"/>
    <property type="match status" value="1"/>
</dbReference>
<dbReference type="Pfam" id="PF04321">
    <property type="entry name" value="RmlD_sub_bind"/>
    <property type="match status" value="1"/>
</dbReference>
<dbReference type="SUPFAM" id="SSF51735">
    <property type="entry name" value="NAD(P)-binding Rossmann-fold domains"/>
    <property type="match status" value="2"/>
</dbReference>
<sequence length="664" mass="74914">MATYKPKNILITGAAGFIASHVANRLVRSYPDYKIVVLDKLDYCSNLKNLNPSKSSPNFKFVKGDIASADLVNYLLITEEIDTIMHFAAQTHVDNSFGNSFEFTKNNIYGTHVLLEACKVTGQIRRFIHVSTDEVYGETDEDASVGNHEASQLLPTNPYSATKAGAEMLVMAYGRSYGLPVITTRGNNVYGPNQFPEKLIPKFILLAMNGKPLPIHGDGSNVRSYLYCEDVAEAFEVVLHKGEVNHVYNIGTTRERRVIDVANDISKLFGIDPDSTIQYVENRPFNDQRYFLDDQKLKKLGWCERTNWEEGLRKTMEWYTENPEWWGDVSGALLPHPRMLMMPGDRHSDGSDEHKNADGNQTFTVVTPTKAGCSGDKRSLKFLIYGKTGWLGGLLGKLCEKQGIPYEYGKGRLEDRASLIADIRSIKPSHVFNAAGLTGRPNVDWCESHKTETIRVNVAGTLTLADVCRENDLLMMNFATGCIFEYDAAHPEGSGIGFKEEDKPNFTGSFYSKTKAMVEELLREFDNVCTLRVRMPISSDLNNPRNFITKISRYNKVVNIPNSMTILDELLPISIEMAKRNLRGIWNFTNPGVVSHNEILEMYKSYIEPDFKWSNFNLEEQAKVIVAPRSNNEMDGAKLSKEFPEMLSIKDSLIKYVFEPNKRT</sequence>